<name>SOEA_ALLVD</name>
<evidence type="ECO:0000250" key="1">
    <source>
        <dbReference type="UniProtKB" id="P18775"/>
    </source>
</evidence>
<evidence type="ECO:0000255" key="2">
    <source>
        <dbReference type="PROSITE-ProRule" id="PRU01004"/>
    </source>
</evidence>
<evidence type="ECO:0000269" key="3">
    <source>
    </source>
</evidence>
<evidence type="ECO:0000303" key="4">
    <source>
    </source>
</evidence>
<evidence type="ECO:0000305" key="5"/>
<evidence type="ECO:0000305" key="6">
    <source>
    </source>
</evidence>
<evidence type="ECO:0000312" key="7">
    <source>
        <dbReference type="EMBL" id="ADC63403.1"/>
    </source>
</evidence>
<proteinExistence type="evidence at protein level"/>
<comment type="function">
    <text evidence="3">Part of the SoeABC complex that catalyzes the oxidation of sulfite to sulfate.</text>
</comment>
<comment type="catalytic activity">
    <reaction evidence="3">
        <text>a quinone + sulfite + H2O = a quinol + sulfate</text>
        <dbReference type="Rhea" id="RHEA:50760"/>
        <dbReference type="ChEBI" id="CHEBI:15377"/>
        <dbReference type="ChEBI" id="CHEBI:16189"/>
        <dbReference type="ChEBI" id="CHEBI:17359"/>
        <dbReference type="ChEBI" id="CHEBI:24646"/>
        <dbReference type="ChEBI" id="CHEBI:132124"/>
        <dbReference type="EC" id="1.8.5.6"/>
    </reaction>
</comment>
<comment type="catalytic activity">
    <reaction evidence="3">
        <text>a menaquinone + sulfite + H2O = a menaquinol + sulfate</text>
        <dbReference type="Rhea" id="RHEA:57012"/>
        <dbReference type="Rhea" id="RHEA-COMP:9537"/>
        <dbReference type="Rhea" id="RHEA-COMP:9539"/>
        <dbReference type="ChEBI" id="CHEBI:15377"/>
        <dbReference type="ChEBI" id="CHEBI:16189"/>
        <dbReference type="ChEBI" id="CHEBI:16374"/>
        <dbReference type="ChEBI" id="CHEBI:17359"/>
        <dbReference type="ChEBI" id="CHEBI:18151"/>
    </reaction>
</comment>
<comment type="cofactor">
    <cofactor evidence="1">
        <name>[4Fe-4S] cluster</name>
        <dbReference type="ChEBI" id="CHEBI:49883"/>
    </cofactor>
    <text evidence="1">Binds 1 [4Fe-4S] cluster.</text>
</comment>
<comment type="cofactor">
    <cofactor evidence="1">
        <name>Mo-bis(molybdopterin guanine dinucleotide)</name>
        <dbReference type="ChEBI" id="CHEBI:60539"/>
    </cofactor>
    <text evidence="1">Binds 1 molybdenum-bis(molybdopterin guanine dinucleotide) (Mo-bis-MGD) cofactor per subunit.</text>
</comment>
<comment type="subunit">
    <text evidence="6">Forms a heterotrimeric membrane-bound complex composed of a catalytic heterodimer (SoeAB) and a membrane anchor protein (SoeC).</text>
</comment>
<comment type="subcellular location">
    <subcellularLocation>
        <location evidence="6">Cell inner membrane</location>
        <topology evidence="6">Peripheral membrane protein</topology>
        <orientation evidence="6">Cytoplasmic side</orientation>
    </subcellularLocation>
    <text evidence="6">Attached to the membrane by interaction with SoeC.</text>
</comment>
<comment type="disruption phenotype">
    <text evidence="3">Deletion of the gene causes a strong decrease in sulfite oxidation rate.</text>
</comment>
<comment type="similarity">
    <text evidence="5">Belongs to the prokaryotic molybdopterin-containing oxidoreductase family.</text>
</comment>
<reference key="1">
    <citation type="journal article" date="2011" name="Stand. Genomic Sci.">
        <title>Complete genome sequence of Allochromatium vinosum DSM 180(T).</title>
        <authorList>
            <person name="Weissgerber T."/>
            <person name="Zigann R."/>
            <person name="Bruce D."/>
            <person name="Chang Y.J."/>
            <person name="Detter J.C."/>
            <person name="Han C."/>
            <person name="Hauser L."/>
            <person name="Jeffries C.D."/>
            <person name="Land M."/>
            <person name="Munk A.C."/>
            <person name="Tapia R."/>
            <person name="Dahl C."/>
        </authorList>
    </citation>
    <scope>NUCLEOTIDE SEQUENCE [LARGE SCALE GENOMIC DNA]</scope>
    <source>
        <strain>ATCC 17899 / DSM 180 / NBRC 103801 / NCIMB 10441 / D</strain>
    </source>
</reference>
<reference key="2">
    <citation type="journal article" date="2013" name="Microbiology">
        <title>Sulfite oxidation in the purple sulfur bacterium Allochromatium vinosum: identification of SoeABC as a major player and relevance of SoxYZ in the process.</title>
        <authorList>
            <person name="Dahl C."/>
            <person name="Franz B."/>
            <person name="Hensen D."/>
            <person name="Kesselheim A."/>
            <person name="Zigann R."/>
        </authorList>
    </citation>
    <scope>FUNCTION</scope>
    <scope>CATALYTIC ACTIVITY</scope>
    <scope>SUBUNIT</scope>
    <scope>SUBCELLULAR LOCATION</scope>
    <scope>DISRUPTION PHENOTYPE</scope>
    <source>
        <strain>ATCC 17899 / DSM 180 / NBRC 103801 / NCIMB 10441 / D</strain>
    </source>
</reference>
<dbReference type="EC" id="1.8.5.6" evidence="3"/>
<dbReference type="EMBL" id="CP001896">
    <property type="protein sequence ID" value="ADC63403.1"/>
    <property type="molecule type" value="Genomic_DNA"/>
</dbReference>
<dbReference type="RefSeq" id="WP_012971673.1">
    <property type="nucleotide sequence ID" value="NC_013851.1"/>
</dbReference>
<dbReference type="SMR" id="D3RNN8"/>
<dbReference type="STRING" id="572477.Alvin_2491"/>
<dbReference type="KEGG" id="alv:Alvin_2491"/>
<dbReference type="eggNOG" id="COG0243">
    <property type="taxonomic scope" value="Bacteria"/>
</dbReference>
<dbReference type="HOGENOM" id="CLU_000422_13_3_6"/>
<dbReference type="OrthoDB" id="9815647at2"/>
<dbReference type="BioCyc" id="MetaCyc:MONOMER-18521"/>
<dbReference type="BRENDA" id="1.8.5.6">
    <property type="organism ID" value="257"/>
</dbReference>
<dbReference type="Proteomes" id="UP000001441">
    <property type="component" value="Chromosome"/>
</dbReference>
<dbReference type="GO" id="GO:0005886">
    <property type="term" value="C:plasma membrane"/>
    <property type="evidence" value="ECO:0007669"/>
    <property type="project" value="UniProtKB-SubCell"/>
</dbReference>
<dbReference type="GO" id="GO:0051539">
    <property type="term" value="F:4 iron, 4 sulfur cluster binding"/>
    <property type="evidence" value="ECO:0007669"/>
    <property type="project" value="UniProtKB-KW"/>
</dbReference>
<dbReference type="GO" id="GO:0046872">
    <property type="term" value="F:metal ion binding"/>
    <property type="evidence" value="ECO:0007669"/>
    <property type="project" value="UniProtKB-KW"/>
</dbReference>
<dbReference type="GO" id="GO:0043546">
    <property type="term" value="F:molybdopterin cofactor binding"/>
    <property type="evidence" value="ECO:0007669"/>
    <property type="project" value="InterPro"/>
</dbReference>
<dbReference type="GO" id="GO:0016491">
    <property type="term" value="F:oxidoreductase activity"/>
    <property type="evidence" value="ECO:0007669"/>
    <property type="project" value="UniProtKB-KW"/>
</dbReference>
<dbReference type="CDD" id="cd02783">
    <property type="entry name" value="MopB_CT_2"/>
    <property type="match status" value="1"/>
</dbReference>
<dbReference type="Gene3D" id="2.40.40.20">
    <property type="match status" value="1"/>
</dbReference>
<dbReference type="Gene3D" id="3.30.200.210">
    <property type="match status" value="1"/>
</dbReference>
<dbReference type="Gene3D" id="3.40.50.740">
    <property type="match status" value="1"/>
</dbReference>
<dbReference type="Gene3D" id="3.40.228.10">
    <property type="entry name" value="Dimethylsulfoxide Reductase, domain 2"/>
    <property type="match status" value="1"/>
</dbReference>
<dbReference type="InterPro" id="IPR009010">
    <property type="entry name" value="Asp_de-COase-like_dom_sf"/>
</dbReference>
<dbReference type="InterPro" id="IPR006657">
    <property type="entry name" value="MoPterin_dinucl-bd_dom"/>
</dbReference>
<dbReference type="InterPro" id="IPR006656">
    <property type="entry name" value="Mopterin_OxRdtase"/>
</dbReference>
<dbReference type="InterPro" id="IPR006963">
    <property type="entry name" value="Mopterin_OxRdtase_4Fe-4S_dom"/>
</dbReference>
<dbReference type="PANTHER" id="PTHR43598:SF5">
    <property type="entry name" value="DMSO REDUCTASE CHAIN A"/>
    <property type="match status" value="1"/>
</dbReference>
<dbReference type="PANTHER" id="PTHR43598">
    <property type="entry name" value="TUNGSTEN-CONTAINING FORMYLMETHANOFURAN DEHYDROGENASE 2 SUBUNIT B"/>
    <property type="match status" value="1"/>
</dbReference>
<dbReference type="Pfam" id="PF04879">
    <property type="entry name" value="Molybdop_Fe4S4"/>
    <property type="match status" value="1"/>
</dbReference>
<dbReference type="Pfam" id="PF00384">
    <property type="entry name" value="Molybdopterin"/>
    <property type="match status" value="1"/>
</dbReference>
<dbReference type="Pfam" id="PF01568">
    <property type="entry name" value="Molydop_binding"/>
    <property type="match status" value="1"/>
</dbReference>
<dbReference type="SMART" id="SM00926">
    <property type="entry name" value="Molybdop_Fe4S4"/>
    <property type="match status" value="1"/>
</dbReference>
<dbReference type="SUPFAM" id="SSF50692">
    <property type="entry name" value="ADC-like"/>
    <property type="match status" value="1"/>
</dbReference>
<dbReference type="SUPFAM" id="SSF53706">
    <property type="entry name" value="Formate dehydrogenase/DMSO reductase, domains 1-3"/>
    <property type="match status" value="1"/>
</dbReference>
<dbReference type="PROSITE" id="PS51669">
    <property type="entry name" value="4FE4S_MOW_BIS_MGD"/>
    <property type="match status" value="1"/>
</dbReference>
<keyword id="KW-0004">4Fe-4S</keyword>
<keyword id="KW-0997">Cell inner membrane</keyword>
<keyword id="KW-1003">Cell membrane</keyword>
<keyword id="KW-0408">Iron</keyword>
<keyword id="KW-0411">Iron-sulfur</keyword>
<keyword id="KW-0472">Membrane</keyword>
<keyword id="KW-0479">Metal-binding</keyword>
<keyword id="KW-0500">Molybdenum</keyword>
<keyword id="KW-0560">Oxidoreductase</keyword>
<keyword id="KW-1185">Reference proteome</keyword>
<gene>
    <name evidence="4" type="primary">soeA</name>
    <name evidence="7" type="ordered locus">Alvin_2491</name>
</gene>
<organism>
    <name type="scientific">Allochromatium vinosum (strain ATCC 17899 / DSM 180 / NBRC 103801 / NCIMB 10441 / D)</name>
    <name type="common">Chromatium vinosum</name>
    <dbReference type="NCBI Taxonomy" id="572477"/>
    <lineage>
        <taxon>Bacteria</taxon>
        <taxon>Pseudomonadati</taxon>
        <taxon>Pseudomonadota</taxon>
        <taxon>Gammaproteobacteria</taxon>
        <taxon>Chromatiales</taxon>
        <taxon>Chromatiaceae</taxon>
        <taxon>Allochromatium</taxon>
    </lineage>
</organism>
<feature type="chain" id="PRO_0000446046" description="Sulfite dehydrogenase subunit A">
    <location>
        <begin position="1"/>
        <end position="967"/>
    </location>
</feature>
<feature type="domain" description="4Fe-4S Mo/W bis-MGD-type" evidence="2">
    <location>
        <begin position="15"/>
        <end position="71"/>
    </location>
</feature>
<feature type="binding site" evidence="2">
    <location>
        <position position="22"/>
    </location>
    <ligand>
        <name>[4Fe-4S] cluster</name>
        <dbReference type="ChEBI" id="CHEBI:49883"/>
    </ligand>
</feature>
<feature type="binding site" evidence="2">
    <location>
        <position position="25"/>
    </location>
    <ligand>
        <name>[4Fe-4S] cluster</name>
        <dbReference type="ChEBI" id="CHEBI:49883"/>
    </ligand>
</feature>
<feature type="binding site" evidence="2">
    <location>
        <position position="29"/>
    </location>
    <ligand>
        <name>[4Fe-4S] cluster</name>
        <dbReference type="ChEBI" id="CHEBI:49883"/>
    </ligand>
</feature>
<feature type="binding site" evidence="2">
    <location>
        <position position="57"/>
    </location>
    <ligand>
        <name>[4Fe-4S] cluster</name>
        <dbReference type="ChEBI" id="CHEBI:49883"/>
    </ligand>
</feature>
<protein>
    <recommendedName>
        <fullName evidence="5">Sulfite dehydrogenase subunit A</fullName>
        <ecNumber evidence="3">1.8.5.6</ecNumber>
    </recommendedName>
    <alternativeName>
        <fullName evidence="5">Sulfite dehydrogenase molybdopterin subunit</fullName>
    </alternativeName>
    <alternativeName>
        <fullName evidence="5">Sulfite-oxidizing enzyme subunit A</fullName>
    </alternativeName>
</protein>
<sequence>MQDPASHSDSLVGRVEVKETTCYMCACRCGIRVHLRDGEVRYIDGNPNHPLNKGVICAKGSSGIMKQYSPGRLTQPLRRKAGAERGESAFEVISWDEAFAMLEERLAKLRAEDPKKFALFTGRDQMQALTGLFAKQYGTPNYAAHGGFCSVNMAAGLIYTIGGSFWEFGGPDLERAKLFVMIGTAEDHHSNPLKMAISEFKRRGGRFISVNPVRTGYSAVADEWVPIKPGTDGALLLAITREILDKGLFDRDFLVRYTNAAELVIDDPSRDDHGLFYRAEMHVEPDCFDPQNKLWWDRDIDGPISTHTPGADPRLMGRYVLPDGTPVKPSFQLLKERLEQYTPEWAAPITGIPADTIRRLAHEMGVMARDQKIELPIKWTDCWDDEHESVTGNPVAFHAMRGLAAHSNGFQTIRALGVLMTVLGTIDRPGGFRHKAPYPRPIPPCPKPPHGPEAVQPNTPLDGMPLGWPSKPEDLFVDAEGEAVRLDKAFSWEYPLSVHGLMHNVITNAWRGDPYPIDTLFLFMANMAWNSTMNTVEVRKMLVDKHPNGDYKIPFLVVCDTFASETVAFADLVLPDTSYLERHDVLSMLDRPISEFDGPVDSVRIPVLPPKGECKPFQEVLVELGSRLKLPAFTNADGSRKYRNYPDFIVNYETSPGSGIGFLAGWRGKGGDQFLKGEPNPHQWEMYAQNNCVYHHELPRSYQYMRNWNKGYLHWARAHGMIRYAEPITLHLYSEVLQRFRLAAQGKRPGRQPPERLRQRVETYFDPLPFYYEPLESRFTDTQRYPLNALTQRPMAMYHSWDSQNAWLRQIHSHNYLFLSPKVGLAQGFADGDWVWVESPHGKVRCMCRFSEAVEPGTVWTWNAIGKGAGAWGLAPNADEARKGFLLNHVIAEELPAHEAGEHLSNSDPVTGQAAWFDVRVRVYKAEAGEPEVTSPQFKPMPRLPGQEKKRGKWQAYVAGIFGKQAS</sequence>
<accession>D3RNN8</accession>